<reference key="1">
    <citation type="journal article" date="2008" name="Chem. Biol. Interact.">
        <title>Extending the Bacillus cereus group genomics to putative food-borne pathogens of different toxicity.</title>
        <authorList>
            <person name="Lapidus A."/>
            <person name="Goltsman E."/>
            <person name="Auger S."/>
            <person name="Galleron N."/>
            <person name="Segurens B."/>
            <person name="Dossat C."/>
            <person name="Land M.L."/>
            <person name="Broussolle V."/>
            <person name="Brillard J."/>
            <person name="Guinebretiere M.-H."/>
            <person name="Sanchis V."/>
            <person name="Nguen-the C."/>
            <person name="Lereclus D."/>
            <person name="Richardson P."/>
            <person name="Wincker P."/>
            <person name="Weissenbach J."/>
            <person name="Ehrlich S.D."/>
            <person name="Sorokin A."/>
        </authorList>
    </citation>
    <scope>NUCLEOTIDE SEQUENCE [LARGE SCALE GENOMIC DNA]</scope>
    <source>
        <strain>DSM 22905 / CIP 110041 / 391-98 / NVH 391-98</strain>
    </source>
</reference>
<gene>
    <name evidence="1" type="primary">engB</name>
    <name type="ordered locus">Bcer98_3183</name>
</gene>
<keyword id="KW-0131">Cell cycle</keyword>
<keyword id="KW-0132">Cell division</keyword>
<keyword id="KW-0342">GTP-binding</keyword>
<keyword id="KW-0460">Magnesium</keyword>
<keyword id="KW-0479">Metal-binding</keyword>
<keyword id="KW-0547">Nucleotide-binding</keyword>
<keyword id="KW-0717">Septation</keyword>
<proteinExistence type="inferred from homology"/>
<dbReference type="EMBL" id="CP000764">
    <property type="protein sequence ID" value="ABS23406.1"/>
    <property type="molecule type" value="Genomic_DNA"/>
</dbReference>
<dbReference type="SMR" id="A7GTE8"/>
<dbReference type="STRING" id="315749.Bcer98_3183"/>
<dbReference type="GeneID" id="33898432"/>
<dbReference type="KEGG" id="bcy:Bcer98_3183"/>
<dbReference type="eggNOG" id="COG0218">
    <property type="taxonomic scope" value="Bacteria"/>
</dbReference>
<dbReference type="HOGENOM" id="CLU_033732_3_0_9"/>
<dbReference type="OrthoDB" id="9804921at2"/>
<dbReference type="Proteomes" id="UP000002300">
    <property type="component" value="Chromosome"/>
</dbReference>
<dbReference type="GO" id="GO:0005829">
    <property type="term" value="C:cytosol"/>
    <property type="evidence" value="ECO:0007669"/>
    <property type="project" value="TreeGrafter"/>
</dbReference>
<dbReference type="GO" id="GO:0005525">
    <property type="term" value="F:GTP binding"/>
    <property type="evidence" value="ECO:0007669"/>
    <property type="project" value="UniProtKB-UniRule"/>
</dbReference>
<dbReference type="GO" id="GO:0046872">
    <property type="term" value="F:metal ion binding"/>
    <property type="evidence" value="ECO:0007669"/>
    <property type="project" value="UniProtKB-KW"/>
</dbReference>
<dbReference type="GO" id="GO:0000917">
    <property type="term" value="P:division septum assembly"/>
    <property type="evidence" value="ECO:0007669"/>
    <property type="project" value="UniProtKB-KW"/>
</dbReference>
<dbReference type="CDD" id="cd01876">
    <property type="entry name" value="YihA_EngB"/>
    <property type="match status" value="1"/>
</dbReference>
<dbReference type="FunFam" id="3.40.50.300:FF:000098">
    <property type="entry name" value="Probable GTP-binding protein EngB"/>
    <property type="match status" value="1"/>
</dbReference>
<dbReference type="Gene3D" id="3.40.50.300">
    <property type="entry name" value="P-loop containing nucleotide triphosphate hydrolases"/>
    <property type="match status" value="1"/>
</dbReference>
<dbReference type="HAMAP" id="MF_00321">
    <property type="entry name" value="GTPase_EngB"/>
    <property type="match status" value="1"/>
</dbReference>
<dbReference type="InterPro" id="IPR030393">
    <property type="entry name" value="G_ENGB_dom"/>
</dbReference>
<dbReference type="InterPro" id="IPR006073">
    <property type="entry name" value="GTP-bd"/>
</dbReference>
<dbReference type="InterPro" id="IPR019987">
    <property type="entry name" value="GTP-bd_ribosome_bio_YsxC"/>
</dbReference>
<dbReference type="InterPro" id="IPR027417">
    <property type="entry name" value="P-loop_NTPase"/>
</dbReference>
<dbReference type="NCBIfam" id="TIGR03598">
    <property type="entry name" value="GTPase_YsxC"/>
    <property type="match status" value="1"/>
</dbReference>
<dbReference type="PANTHER" id="PTHR11649:SF13">
    <property type="entry name" value="ENGB-TYPE G DOMAIN-CONTAINING PROTEIN"/>
    <property type="match status" value="1"/>
</dbReference>
<dbReference type="PANTHER" id="PTHR11649">
    <property type="entry name" value="MSS1/TRME-RELATED GTP-BINDING PROTEIN"/>
    <property type="match status" value="1"/>
</dbReference>
<dbReference type="Pfam" id="PF01926">
    <property type="entry name" value="MMR_HSR1"/>
    <property type="match status" value="1"/>
</dbReference>
<dbReference type="SUPFAM" id="SSF52540">
    <property type="entry name" value="P-loop containing nucleoside triphosphate hydrolases"/>
    <property type="match status" value="1"/>
</dbReference>
<dbReference type="PROSITE" id="PS51706">
    <property type="entry name" value="G_ENGB"/>
    <property type="match status" value="1"/>
</dbReference>
<protein>
    <recommendedName>
        <fullName evidence="1">Probable GTP-binding protein EngB</fullName>
    </recommendedName>
</protein>
<feature type="chain" id="PRO_1000079163" description="Probable GTP-binding protein EngB">
    <location>
        <begin position="1"/>
        <end position="198"/>
    </location>
</feature>
<feature type="domain" description="EngB-type G" evidence="1">
    <location>
        <begin position="22"/>
        <end position="195"/>
    </location>
</feature>
<feature type="binding site" evidence="1">
    <location>
        <begin position="30"/>
        <end position="37"/>
    </location>
    <ligand>
        <name>GTP</name>
        <dbReference type="ChEBI" id="CHEBI:37565"/>
    </ligand>
</feature>
<feature type="binding site" evidence="1">
    <location>
        <position position="37"/>
    </location>
    <ligand>
        <name>Mg(2+)</name>
        <dbReference type="ChEBI" id="CHEBI:18420"/>
    </ligand>
</feature>
<feature type="binding site" evidence="1">
    <location>
        <begin position="57"/>
        <end position="61"/>
    </location>
    <ligand>
        <name>GTP</name>
        <dbReference type="ChEBI" id="CHEBI:37565"/>
    </ligand>
</feature>
<feature type="binding site" evidence="1">
    <location>
        <position position="59"/>
    </location>
    <ligand>
        <name>Mg(2+)</name>
        <dbReference type="ChEBI" id="CHEBI:18420"/>
    </ligand>
</feature>
<feature type="binding site" evidence="1">
    <location>
        <begin position="75"/>
        <end position="78"/>
    </location>
    <ligand>
        <name>GTP</name>
        <dbReference type="ChEBI" id="CHEBI:37565"/>
    </ligand>
</feature>
<feature type="binding site" evidence="1">
    <location>
        <begin position="142"/>
        <end position="145"/>
    </location>
    <ligand>
        <name>GTP</name>
        <dbReference type="ChEBI" id="CHEBI:37565"/>
    </ligand>
</feature>
<feature type="binding site" evidence="1">
    <location>
        <begin position="174"/>
        <end position="176"/>
    </location>
    <ligand>
        <name>GTP</name>
        <dbReference type="ChEBI" id="CHEBI:37565"/>
    </ligand>
</feature>
<comment type="function">
    <text evidence="1">Necessary for normal cell division and for the maintenance of normal septation.</text>
</comment>
<comment type="cofactor">
    <cofactor evidence="1">
        <name>Mg(2+)</name>
        <dbReference type="ChEBI" id="CHEBI:18420"/>
    </cofactor>
</comment>
<comment type="similarity">
    <text evidence="1">Belongs to the TRAFAC class TrmE-Era-EngA-EngB-Septin-like GTPase superfamily. EngB GTPase family.</text>
</comment>
<accession>A7GTE8</accession>
<organism>
    <name type="scientific">Bacillus cytotoxicus (strain DSM 22905 / CIP 110041 / 391-98 / NVH 391-98)</name>
    <dbReference type="NCBI Taxonomy" id="315749"/>
    <lineage>
        <taxon>Bacteria</taxon>
        <taxon>Bacillati</taxon>
        <taxon>Bacillota</taxon>
        <taxon>Bacilli</taxon>
        <taxon>Bacillales</taxon>
        <taxon>Bacillaceae</taxon>
        <taxon>Bacillus</taxon>
        <taxon>Bacillus cereus group</taxon>
    </lineage>
</organism>
<name>ENGB_BACCN</name>
<sequence>MKVTKAEIVISAVRPDQYPGGDLPEIALAGRSNVGKSSFINTILNRKKLVRISSKPGKTQTLNFFIINDMMHFVDVPGYGYAKVSKSERAAWGKMIETYFTTREQLDATVLVIDLRHPPTKDDVMMYDFLKHYEIPTIIIATKADKIPKGKWQKHLKVVKETLDVEAGDEVVLFSSETGLGKEEAWKAIHKFTKTKNA</sequence>
<evidence type="ECO:0000255" key="1">
    <source>
        <dbReference type="HAMAP-Rule" id="MF_00321"/>
    </source>
</evidence>